<dbReference type="EMBL" id="BC063342">
    <property type="protein sequence ID" value="AAH63342.1"/>
    <property type="molecule type" value="mRNA"/>
</dbReference>
<dbReference type="RefSeq" id="NP_989170.1">
    <property type="nucleotide sequence ID" value="NM_203839.1"/>
</dbReference>
<dbReference type="SMR" id="Q6P4M5"/>
<dbReference type="FunCoup" id="Q6P4M5">
    <property type="interactions" value="184"/>
</dbReference>
<dbReference type="STRING" id="8364.ENSXETP00000020682"/>
<dbReference type="GlyCosmos" id="Q6P4M5">
    <property type="glycosylation" value="3 sites, No reported glycans"/>
</dbReference>
<dbReference type="PaxDb" id="8364-ENSXETP00000054189"/>
<dbReference type="DNASU" id="394777"/>
<dbReference type="GeneID" id="394777"/>
<dbReference type="KEGG" id="xtr:394777"/>
<dbReference type="AGR" id="Xenbase:XB-GENE-947602"/>
<dbReference type="CTD" id="54438"/>
<dbReference type="Xenbase" id="XB-GENE-947602">
    <property type="gene designation" value="gfod1"/>
</dbReference>
<dbReference type="eggNOG" id="KOG2742">
    <property type="taxonomic scope" value="Eukaryota"/>
</dbReference>
<dbReference type="HOGENOM" id="CLU_023194_8_0_1"/>
<dbReference type="InParanoid" id="Q6P4M5"/>
<dbReference type="OrthoDB" id="446809at2759"/>
<dbReference type="TreeFam" id="TF323246"/>
<dbReference type="Reactome" id="R-XTR-9013406">
    <property type="pathway name" value="RHOQ GTPase cycle"/>
</dbReference>
<dbReference type="Proteomes" id="UP000008143">
    <property type="component" value="Chromosome 6"/>
</dbReference>
<dbReference type="Bgee" id="ENSXETG00000025401">
    <property type="expression patterns" value="Expressed in brain and 13 other cell types or tissues"/>
</dbReference>
<dbReference type="ExpressionAtlas" id="Q6P4M5">
    <property type="expression patterns" value="differential"/>
</dbReference>
<dbReference type="GO" id="GO:0005576">
    <property type="term" value="C:extracellular region"/>
    <property type="evidence" value="ECO:0007669"/>
    <property type="project" value="UniProtKB-SubCell"/>
</dbReference>
<dbReference type="GO" id="GO:0042802">
    <property type="term" value="F:identical protein binding"/>
    <property type="evidence" value="ECO:0000250"/>
    <property type="project" value="UniProtKB"/>
</dbReference>
<dbReference type="GO" id="GO:0000166">
    <property type="term" value="F:nucleotide binding"/>
    <property type="evidence" value="ECO:0007669"/>
    <property type="project" value="InterPro"/>
</dbReference>
<dbReference type="GO" id="GO:0016491">
    <property type="term" value="F:oxidoreductase activity"/>
    <property type="evidence" value="ECO:0007669"/>
    <property type="project" value="UniProtKB-KW"/>
</dbReference>
<dbReference type="Gene3D" id="3.30.360.10">
    <property type="entry name" value="Dihydrodipicolinate Reductase, domain 2"/>
    <property type="match status" value="1"/>
</dbReference>
<dbReference type="Gene3D" id="3.40.50.720">
    <property type="entry name" value="NAD(P)-binding Rossmann-like Domain"/>
    <property type="match status" value="1"/>
</dbReference>
<dbReference type="InterPro" id="IPR000683">
    <property type="entry name" value="Gfo/Idh/MocA-like_OxRdtase_N"/>
</dbReference>
<dbReference type="InterPro" id="IPR050463">
    <property type="entry name" value="Gfo/Idh/MocA_oxidrdct_glycsds"/>
</dbReference>
<dbReference type="InterPro" id="IPR055170">
    <property type="entry name" value="GFO_IDH_MocA-like_dom"/>
</dbReference>
<dbReference type="InterPro" id="IPR036291">
    <property type="entry name" value="NAD(P)-bd_dom_sf"/>
</dbReference>
<dbReference type="PANTHER" id="PTHR43818">
    <property type="entry name" value="BCDNA.GH03377"/>
    <property type="match status" value="1"/>
</dbReference>
<dbReference type="PANTHER" id="PTHR43818:SF2">
    <property type="entry name" value="GLUCOSE-FRUCTOSE OXIDOREDUCTASE DOMAIN-CONTAINING PROTEIN 1"/>
    <property type="match status" value="1"/>
</dbReference>
<dbReference type="Pfam" id="PF01408">
    <property type="entry name" value="GFO_IDH_MocA"/>
    <property type="match status" value="1"/>
</dbReference>
<dbReference type="Pfam" id="PF22725">
    <property type="entry name" value="GFO_IDH_MocA_C3"/>
    <property type="match status" value="1"/>
</dbReference>
<dbReference type="SUPFAM" id="SSF55347">
    <property type="entry name" value="Glyceraldehyde-3-phosphate dehydrogenase-like, C-terminal domain"/>
    <property type="match status" value="1"/>
</dbReference>
<dbReference type="SUPFAM" id="SSF51735">
    <property type="entry name" value="NAD(P)-binding Rossmann-fold domains"/>
    <property type="match status" value="1"/>
</dbReference>
<name>GFOD1_XENTR</name>
<keyword id="KW-0325">Glycoprotein</keyword>
<keyword id="KW-1185">Reference proteome</keyword>
<keyword id="KW-0964">Secreted</keyword>
<keyword id="KW-0732">Signal</keyword>
<proteinExistence type="evidence at transcript level"/>
<reference key="1">
    <citation type="submission" date="2003-12" db="EMBL/GenBank/DDBJ databases">
        <authorList>
            <consortium name="NIH - Xenopus Gene Collection (XGC) project"/>
        </authorList>
    </citation>
    <scope>NUCLEOTIDE SEQUENCE [LARGE SCALE MRNA]</scope>
    <source>
        <tissue>Embryo</tissue>
    </source>
</reference>
<organism>
    <name type="scientific">Xenopus tropicalis</name>
    <name type="common">Western clawed frog</name>
    <name type="synonym">Silurana tropicalis</name>
    <dbReference type="NCBI Taxonomy" id="8364"/>
    <lineage>
        <taxon>Eukaryota</taxon>
        <taxon>Metazoa</taxon>
        <taxon>Chordata</taxon>
        <taxon>Craniata</taxon>
        <taxon>Vertebrata</taxon>
        <taxon>Euteleostomi</taxon>
        <taxon>Amphibia</taxon>
        <taxon>Batrachia</taxon>
        <taxon>Anura</taxon>
        <taxon>Pipoidea</taxon>
        <taxon>Pipidae</taxon>
        <taxon>Xenopodinae</taxon>
        <taxon>Xenopus</taxon>
        <taxon>Silurana</taxon>
    </lineage>
</organism>
<protein>
    <recommendedName>
        <fullName evidence="3">Glucose-fructose oxidoreductase domain-containing protein 1</fullName>
    </recommendedName>
</protein>
<feature type="signal peptide" evidence="2">
    <location>
        <begin position="1"/>
        <end position="21"/>
    </location>
</feature>
<feature type="chain" id="PRO_0000282970" description="Glucose-fructose oxidoreductase domain-containing protein 1">
    <location>
        <begin position="22"/>
        <end position="390"/>
    </location>
</feature>
<feature type="glycosylation site" description="N-linked (GlcNAc...) asparagine" evidence="2">
    <location>
        <position position="161"/>
    </location>
</feature>
<feature type="glycosylation site" description="N-linked (GlcNAc...) asparagine" evidence="2">
    <location>
        <position position="270"/>
    </location>
</feature>
<feature type="glycosylation site" description="N-linked (GlcNAc...) asparagine" evidence="2">
    <location>
        <position position="354"/>
    </location>
</feature>
<evidence type="ECO:0000250" key="1">
    <source>
        <dbReference type="UniProtKB" id="Q9NXC2"/>
    </source>
</evidence>
<evidence type="ECO:0000255" key="2"/>
<evidence type="ECO:0000305" key="3"/>
<comment type="function">
    <text evidence="1">Probably catalytically inactive enzyme. Does not bind NAD or NADP.</text>
</comment>
<comment type="subunit">
    <text evidence="1">Homodimer.</text>
</comment>
<comment type="subcellular location">
    <subcellularLocation>
        <location evidence="3">Secreted</location>
    </subcellularLocation>
</comment>
<comment type="similarity">
    <text evidence="3">Belongs to the Gfo/Idh/MocA family.</text>
</comment>
<accession>Q6P4M5</accession>
<sequence>MLPGVGVFGTSLTSRVIIPLLKDEGFSVKALWGRTQEEAEELAKEMSVPFYTNRIDDVLLHQDVDLVCINLPPPLTKQIAVKTLGIGKNVICDRTATPLDAFRMMSAAHYYPKLMSIMGNVLRFLPAFVKMKQLIQEGYVGELQVCEVQVHSGSLLGKKYNWSCDDLMGGGGLHSVGSYIIDLLTFLTSQKAVKVHGLLKTFVKQTDHIKGIRQITSDDFCTFQMVLEGGVCCTVTLNFNVPGEFKQDVIVVGSAGRLIVTGIDLYGQRNSSSDRELLLKDSTPVSNSLLPEKAFSDIPSPYLRGTIKMVQAVRQAFQDQDDRRTWDGRPLTMAATFDDCLYALCVVDTIKKSNQTGEWQNIVIMTEEPELSPAYLISEAMRRSRMSLYC</sequence>
<gene>
    <name type="primary">gfod1</name>
</gene>